<evidence type="ECO:0000250" key="1"/>
<evidence type="ECO:0000305" key="2"/>
<keyword id="KW-0256">Endoplasmic reticulum</keyword>
<keyword id="KW-0349">Heme</keyword>
<keyword id="KW-0408">Iron</keyword>
<keyword id="KW-0472">Membrane</keyword>
<keyword id="KW-0479">Metal-binding</keyword>
<keyword id="KW-0492">Microsome</keyword>
<keyword id="KW-0503">Monooxygenase</keyword>
<keyword id="KW-0560">Oxidoreductase</keyword>
<keyword id="KW-1185">Reference proteome</keyword>
<gene>
    <name type="primary">CYP2D19</name>
</gene>
<dbReference type="EC" id="1.14.14.1"/>
<dbReference type="EMBL" id="D29822">
    <property type="protein sequence ID" value="BAA22155.1"/>
    <property type="molecule type" value="mRNA"/>
</dbReference>
<dbReference type="RefSeq" id="NP_001191367.1">
    <property type="nucleotide sequence ID" value="NM_001204438.1"/>
</dbReference>
<dbReference type="SMR" id="O18992"/>
<dbReference type="FunCoup" id="O18992">
    <property type="interactions" value="393"/>
</dbReference>
<dbReference type="STRING" id="9483.ENSCJAP00000004200"/>
<dbReference type="Ensembl" id="ENSCJAT00000004428.5">
    <property type="protein sequence ID" value="ENSCJAP00000004200.3"/>
    <property type="gene ID" value="ENSCJAG00000002321.6"/>
</dbReference>
<dbReference type="GeneID" id="100385343"/>
<dbReference type="KEGG" id="cjc:100385343"/>
<dbReference type="CTD" id="100385343"/>
<dbReference type="eggNOG" id="KOG0156">
    <property type="taxonomic scope" value="Eukaryota"/>
</dbReference>
<dbReference type="GeneTree" id="ENSGT00940000153331"/>
<dbReference type="HOGENOM" id="CLU_001570_22_0_1"/>
<dbReference type="InParanoid" id="O18992"/>
<dbReference type="OMA" id="RYGHVWK"/>
<dbReference type="OrthoDB" id="3934656at2759"/>
<dbReference type="Proteomes" id="UP000008225">
    <property type="component" value="Chromosome 1"/>
</dbReference>
<dbReference type="Bgee" id="ENSCJAG00000002321">
    <property type="expression patterns" value="Expressed in liver and 4 other cell types or tissues"/>
</dbReference>
<dbReference type="GO" id="GO:0005789">
    <property type="term" value="C:endoplasmic reticulum membrane"/>
    <property type="evidence" value="ECO:0007669"/>
    <property type="project" value="UniProtKB-SubCell"/>
</dbReference>
<dbReference type="GO" id="GO:0020037">
    <property type="term" value="F:heme binding"/>
    <property type="evidence" value="ECO:0007669"/>
    <property type="project" value="InterPro"/>
</dbReference>
<dbReference type="GO" id="GO:0005506">
    <property type="term" value="F:iron ion binding"/>
    <property type="evidence" value="ECO:0007669"/>
    <property type="project" value="InterPro"/>
</dbReference>
<dbReference type="GO" id="GO:0016712">
    <property type="term" value="F:oxidoreductase activity, acting on paired donors, with incorporation or reduction of molecular oxygen, reduced flavin or flavoprotein as one donor, and incorporation of one atom of oxygen"/>
    <property type="evidence" value="ECO:0007669"/>
    <property type="project" value="UniProtKB-EC"/>
</dbReference>
<dbReference type="GO" id="GO:0019369">
    <property type="term" value="P:arachidonate metabolic process"/>
    <property type="evidence" value="ECO:0007669"/>
    <property type="project" value="TreeGrafter"/>
</dbReference>
<dbReference type="GO" id="GO:0006805">
    <property type="term" value="P:xenobiotic metabolic process"/>
    <property type="evidence" value="ECO:0007669"/>
    <property type="project" value="TreeGrafter"/>
</dbReference>
<dbReference type="CDD" id="cd20663">
    <property type="entry name" value="CYP2D"/>
    <property type="match status" value="1"/>
</dbReference>
<dbReference type="FunFam" id="1.10.630.10:FF:000004">
    <property type="entry name" value="cytochrome P450 2D15 isoform X1"/>
    <property type="match status" value="1"/>
</dbReference>
<dbReference type="Gene3D" id="1.10.630.10">
    <property type="entry name" value="Cytochrome P450"/>
    <property type="match status" value="1"/>
</dbReference>
<dbReference type="InterPro" id="IPR001128">
    <property type="entry name" value="Cyt_P450"/>
</dbReference>
<dbReference type="InterPro" id="IPR017972">
    <property type="entry name" value="Cyt_P450_CS"/>
</dbReference>
<dbReference type="InterPro" id="IPR002401">
    <property type="entry name" value="Cyt_P450_E_grp-I"/>
</dbReference>
<dbReference type="InterPro" id="IPR008069">
    <property type="entry name" value="Cyt_P450_E_grp-I_CYP2D-like"/>
</dbReference>
<dbReference type="InterPro" id="IPR036396">
    <property type="entry name" value="Cyt_P450_sf"/>
</dbReference>
<dbReference type="InterPro" id="IPR050182">
    <property type="entry name" value="Cytochrome_P450_fam2"/>
</dbReference>
<dbReference type="PANTHER" id="PTHR24300:SF1">
    <property type="entry name" value="CYTOCHROME P450 2D6-RELATED"/>
    <property type="match status" value="1"/>
</dbReference>
<dbReference type="PANTHER" id="PTHR24300">
    <property type="entry name" value="CYTOCHROME P450 508A4-RELATED"/>
    <property type="match status" value="1"/>
</dbReference>
<dbReference type="Pfam" id="PF00067">
    <property type="entry name" value="p450"/>
    <property type="match status" value="1"/>
</dbReference>
<dbReference type="PRINTS" id="PR00463">
    <property type="entry name" value="EP450I"/>
</dbReference>
<dbReference type="PRINTS" id="PR01686">
    <property type="entry name" value="EP450ICYP2D"/>
</dbReference>
<dbReference type="PRINTS" id="PR00385">
    <property type="entry name" value="P450"/>
</dbReference>
<dbReference type="SUPFAM" id="SSF48264">
    <property type="entry name" value="Cytochrome P450"/>
    <property type="match status" value="1"/>
</dbReference>
<dbReference type="PROSITE" id="PS00086">
    <property type="entry name" value="CYTOCHROME_P450"/>
    <property type="match status" value="1"/>
</dbReference>
<feature type="chain" id="PRO_0000051743" description="Cytochrome P450 2D19">
    <location>
        <begin position="1"/>
        <end position="497"/>
    </location>
</feature>
<feature type="binding site" description="axial binding residue" evidence="1">
    <location>
        <position position="443"/>
    </location>
    <ligand>
        <name>heme</name>
        <dbReference type="ChEBI" id="CHEBI:30413"/>
    </ligand>
    <ligandPart>
        <name>Fe</name>
        <dbReference type="ChEBI" id="CHEBI:18248"/>
    </ligandPart>
</feature>
<protein>
    <recommendedName>
        <fullName>Cytochrome P450 2D19</fullName>
        <ecNumber>1.14.14.1</ecNumber>
    </recommendedName>
    <alternativeName>
        <fullName>CYPIID19</fullName>
    </alternativeName>
    <alternativeName>
        <fullName>Cytochrome P450 CM2D-1</fullName>
    </alternativeName>
</protein>
<reference key="1">
    <citation type="journal article" date="1997" name="Arch. Biochem. Biophys.">
        <title>Marmoset liver cytochrome P450s: study for expression and molecular cloning of their cDNAs.</title>
        <authorList>
            <person name="Igarashi T."/>
            <person name="Sakuma T."/>
            <person name="Isogai M."/>
            <person name="Nagata R."/>
            <person name="Kamataki T."/>
        </authorList>
    </citation>
    <scope>NUCLEOTIDE SEQUENCE [MRNA]</scope>
    <source>
        <tissue>Liver</tissue>
    </source>
</reference>
<accession>O18992</accession>
<comment type="function">
    <text>Responsible for the metabolism of many drugs and environmental chemicals that it oxidizes.</text>
</comment>
<comment type="catalytic activity">
    <reaction>
        <text>an organic molecule + reduced [NADPH--hemoprotein reductase] + O2 = an alcohol + oxidized [NADPH--hemoprotein reductase] + H2O + H(+)</text>
        <dbReference type="Rhea" id="RHEA:17149"/>
        <dbReference type="Rhea" id="RHEA-COMP:11964"/>
        <dbReference type="Rhea" id="RHEA-COMP:11965"/>
        <dbReference type="ChEBI" id="CHEBI:15377"/>
        <dbReference type="ChEBI" id="CHEBI:15378"/>
        <dbReference type="ChEBI" id="CHEBI:15379"/>
        <dbReference type="ChEBI" id="CHEBI:30879"/>
        <dbReference type="ChEBI" id="CHEBI:57618"/>
        <dbReference type="ChEBI" id="CHEBI:58210"/>
        <dbReference type="ChEBI" id="CHEBI:142491"/>
        <dbReference type="EC" id="1.14.14.1"/>
    </reaction>
</comment>
<comment type="cofactor">
    <cofactor evidence="1">
        <name>heme</name>
        <dbReference type="ChEBI" id="CHEBI:30413"/>
    </cofactor>
</comment>
<comment type="subcellular location">
    <subcellularLocation>
        <location>Endoplasmic reticulum membrane</location>
        <topology>Peripheral membrane protein</topology>
    </subcellularLocation>
    <subcellularLocation>
        <location>Microsome membrane</location>
        <topology>Peripheral membrane protein</topology>
    </subcellularLocation>
</comment>
<comment type="induction">
    <text>P450 can be induced to high levels in liver and other tissues by various foreign compounds, including drugs, pesticides, and carcinogens.</text>
</comment>
<comment type="similarity">
    <text evidence="2">Belongs to the cytochrome P450 family.</text>
</comment>
<name>CP2DJ_CALJA</name>
<sequence length="497" mass="55912">MGLDALVPLAVTVAIFVLLVDLMHRRQRWAARYPPGPMPLPGLGNLLHVDFQNTPNSFNQLRRRFGDVFSLQLAWTPVVVLNGLEAVREALVTRGEDTADRPPVPITEMLGFGPHSQGLFLARYGPAWREQRRFSVSTLRNLGLGKKSLEQWVTEEATYLCAAFADHAGRPFRPNGLLDKAVSNVIASLTCRRRFEYNDPCLLRLLDLTMEGLKEESGLLREVLNAIPVLLRIPGLAGKVLRSQKAFLAQLDELLTEHRMTWDPAQPPRDLTEAFLAEMEKTKGNPESSFNDENLHLVVADLFSAGMVTTSITLAWGLLLMILHPDVQRRVQQEIDDVIGRVRRPEMGDQTYMPYTTAVIHEVQRFADIVPLGVTHMTSRDIEVQGFLIPKGTTLFTNLSSVLKDEANWEKPFRFHPEHFLDAQGRFVKPEAFLPFSAGRRACLGEPLARMELFLFFTCLLQRFSFSVPAGQPRPSPHGVFAFLVTPSPYELCAVPR</sequence>
<proteinExistence type="evidence at transcript level"/>
<organism>
    <name type="scientific">Callithrix jacchus</name>
    <name type="common">White-tufted-ear marmoset</name>
    <dbReference type="NCBI Taxonomy" id="9483"/>
    <lineage>
        <taxon>Eukaryota</taxon>
        <taxon>Metazoa</taxon>
        <taxon>Chordata</taxon>
        <taxon>Craniata</taxon>
        <taxon>Vertebrata</taxon>
        <taxon>Euteleostomi</taxon>
        <taxon>Mammalia</taxon>
        <taxon>Eutheria</taxon>
        <taxon>Euarchontoglires</taxon>
        <taxon>Primates</taxon>
        <taxon>Haplorrhini</taxon>
        <taxon>Platyrrhini</taxon>
        <taxon>Cebidae</taxon>
        <taxon>Callitrichinae</taxon>
        <taxon>Callithrix</taxon>
        <taxon>Callithrix</taxon>
    </lineage>
</organism>